<protein>
    <recommendedName>
        <fullName evidence="6">Xanthine permease XanQ</fullName>
    </recommendedName>
</protein>
<evidence type="ECO:0000255" key="1"/>
<evidence type="ECO:0000269" key="2">
    <source>
    </source>
</evidence>
<evidence type="ECO:0000269" key="3">
    <source>
    </source>
</evidence>
<evidence type="ECO:0000269" key="4">
    <source>
    </source>
</evidence>
<evidence type="ECO:0000269" key="5">
    <source>
    </source>
</evidence>
<evidence type="ECO:0000305" key="6"/>
<keyword id="KW-0997">Cell inner membrane</keyword>
<keyword id="KW-1003">Cell membrane</keyword>
<keyword id="KW-0472">Membrane</keyword>
<keyword id="KW-1185">Reference proteome</keyword>
<keyword id="KW-0812">Transmembrane</keyword>
<keyword id="KW-1133">Transmembrane helix</keyword>
<keyword id="KW-0813">Transport</keyword>
<gene>
    <name type="primary">xanQ</name>
    <name type="synonym">ygfO</name>
    <name type="ordered locus">b2882</name>
    <name type="ordered locus">JW2850</name>
</gene>
<accession>P67444</accession>
<accession>Q2M9V8</accession>
<accession>Q46815</accession>
<sequence length="466" mass="49108">MSDINHAGSDLIFELEDRPPFHQALVGAITHLLAIFVPMVTPALIVGAALQLSAETTAYLVSMAMIASGIGTWLQVNRYGIVGSGLLSIQSVNFSFVTVMIALGSSMKSDGFHEELIMSSLLGVSFVGAFLVVGSSFILPYLRRVITPTVSGIVVLMIGLSLIKVGIIDFGGGFAAKSSGTFGNYEHLGVGLLVLIVVIGFNCCRSPLLRMGGIAIGLCVGYIASLCLGMVDFSSMRNLPLITIPHPFKYGFSFSFHQFLVVGTIYLLSVLEAVGDITATAMVSRRPIQGEEYQSRLKGGVLADGLVSVIASAVGSLPLTTFAQNNGVIQMTGVASRYVGRTIAVMLVILGLFPMIGGFFTTIPSAVLGGAMTLMFSMIAIAGIRIIITNGLKRRETLIVATSLGLGLGVSYDPEIFKILPASIYVLVENPICAGGLTAILLNIILPGGYRQENVLPGITSAEEMD</sequence>
<feature type="chain" id="PRO_0000165965" description="Xanthine permease XanQ">
    <location>
        <begin position="1"/>
        <end position="466"/>
    </location>
</feature>
<feature type="topological domain" description="Cytoplasmic" evidence="6">
    <location>
        <begin position="1"/>
        <end position="25"/>
    </location>
</feature>
<feature type="transmembrane region" description="Helical" evidence="1">
    <location>
        <begin position="26"/>
        <end position="46"/>
    </location>
</feature>
<feature type="topological domain" description="Periplasmic" evidence="6">
    <location>
        <begin position="47"/>
        <end position="55"/>
    </location>
</feature>
<feature type="transmembrane region" description="Helical" evidence="1">
    <location>
        <begin position="56"/>
        <end position="76"/>
    </location>
</feature>
<feature type="topological domain" description="Cytoplasmic" evidence="6">
    <location>
        <begin position="77"/>
        <end position="80"/>
    </location>
</feature>
<feature type="transmembrane region" description="Helical" evidence="1">
    <location>
        <begin position="81"/>
        <end position="101"/>
    </location>
</feature>
<feature type="topological domain" description="Periplasmic" evidence="6">
    <location>
        <begin position="102"/>
        <end position="120"/>
    </location>
</feature>
<feature type="transmembrane region" description="Helical" evidence="1">
    <location>
        <begin position="121"/>
        <end position="141"/>
    </location>
</feature>
<feature type="topological domain" description="Cytoplasmic" evidence="6">
    <location>
        <begin position="142"/>
        <end position="151"/>
    </location>
</feature>
<feature type="transmembrane region" description="Helical" evidence="1">
    <location>
        <begin position="152"/>
        <end position="172"/>
    </location>
</feature>
<feature type="topological domain" description="Periplasmic" evidence="6">
    <location>
        <begin position="173"/>
        <end position="180"/>
    </location>
</feature>
<feature type="transmembrane region" description="Helical" evidence="1">
    <location>
        <begin position="181"/>
        <end position="201"/>
    </location>
</feature>
<feature type="topological domain" description="Cytoplasmic" evidence="6">
    <location>
        <begin position="202"/>
        <end position="210"/>
    </location>
</feature>
<feature type="transmembrane region" description="Helical" evidence="1">
    <location>
        <begin position="211"/>
        <end position="231"/>
    </location>
</feature>
<feature type="topological domain" description="Periplasmic" evidence="6">
    <location>
        <begin position="232"/>
        <end position="258"/>
    </location>
</feature>
<feature type="transmembrane region" description="Helical" evidence="1">
    <location>
        <begin position="259"/>
        <end position="279"/>
    </location>
</feature>
<feature type="topological domain" description="Cytoplasmic" evidence="6">
    <location>
        <begin position="280"/>
        <end position="298"/>
    </location>
</feature>
<feature type="transmembrane region" description="Helical" evidence="1">
    <location>
        <begin position="299"/>
        <end position="319"/>
    </location>
</feature>
<feature type="topological domain" description="Periplasmic" evidence="6">
    <location>
        <begin position="320"/>
        <end position="342"/>
    </location>
</feature>
<feature type="transmembrane region" description="Helical" evidence="1">
    <location>
        <begin position="343"/>
        <end position="363"/>
    </location>
</feature>
<feature type="topological domain" description="Cytoplasmic" evidence="6">
    <location>
        <position position="364"/>
    </location>
</feature>
<feature type="transmembrane region" description="Helical" evidence="1">
    <location>
        <begin position="365"/>
        <end position="384"/>
    </location>
</feature>
<feature type="topological domain" description="Periplasmic" evidence="6">
    <location>
        <begin position="385"/>
        <end position="425"/>
    </location>
</feature>
<feature type="transmembrane region" description="Helical" evidence="1">
    <location>
        <begin position="426"/>
        <end position="446"/>
    </location>
</feature>
<feature type="topological domain" description="Cytoplasmic" evidence="2">
    <location>
        <begin position="447"/>
        <end position="466"/>
    </location>
</feature>
<feature type="site" description="Essential for affinity and specificity">
    <location>
        <position position="31"/>
    </location>
</feature>
<feature type="site" description="Essential for affinity and specificity">
    <location>
        <position position="93"/>
    </location>
</feature>
<feature type="site" description="Essential for purine uptake">
    <location>
        <position position="272"/>
    </location>
</feature>
<feature type="site" description="Essential for purine uptake">
    <location>
        <position position="304"/>
    </location>
</feature>
<feature type="site" description="Important for purine uptake and affinity">
    <location>
        <position position="430"/>
    </location>
</feature>
<feature type="site" description="Important for purine uptake and affinity">
    <location>
        <position position="432"/>
    </location>
</feature>
<feature type="mutagenesis site" description="Decrease in activity." evidence="5">
    <original>H</original>
    <variation>C</variation>
    <variation>L</variation>
    <location>
        <position position="31"/>
    </location>
</feature>
<feature type="mutagenesis site" description="Strong decrease in activity." evidence="5">
    <original>H</original>
    <variation>K</variation>
    <variation>R</variation>
    <location>
        <position position="31"/>
    </location>
</feature>
<feature type="mutagenesis site" description="No change in activity." evidence="5">
    <original>H</original>
    <variation>N</variation>
    <location>
        <position position="31"/>
    </location>
</feature>
<feature type="mutagenesis site" description="Increase of activity." evidence="5">
    <original>H</original>
    <variation>Q</variation>
    <location>
        <position position="31"/>
    </location>
</feature>
<feature type="mutagenesis site" description="Highly active." evidence="5">
    <original>N</original>
    <variation>A</variation>
    <location>
        <position position="93"/>
    </location>
</feature>
<feature type="mutagenesis site" description="Strong decrease in activity." evidence="5">
    <original>N</original>
    <variation>C</variation>
    <variation>D</variation>
    <variation>T</variation>
    <location>
        <position position="93"/>
    </location>
</feature>
<feature type="mutagenesis site" description="Loss of activity." evidence="5">
    <original>N</original>
    <variation>Q</variation>
    <location>
        <position position="93"/>
    </location>
</feature>
<feature type="mutagenesis site" description="Increase of activity." evidence="5">
    <original>N</original>
    <variation>S</variation>
    <location>
        <position position="93"/>
    </location>
</feature>
<feature type="mutagenesis site" description="Highly active." evidence="5">
    <original>K</original>
    <variation>C</variation>
    <variation>R</variation>
    <location>
        <position position="164"/>
    </location>
</feature>
<feature type="mutagenesis site" description="Decrease in activity." evidence="5">
    <original>D</original>
    <variation>C</variation>
    <location>
        <position position="232"/>
    </location>
</feature>
<feature type="mutagenesis site" description="Highly active." evidence="5">
    <original>D</original>
    <variation>E</variation>
    <location>
        <position position="232"/>
    </location>
</feature>
<feature type="mutagenesis site" description="Decrease in activity." evidence="5">
    <original>Q</original>
    <variation>C</variation>
    <location>
        <position position="258"/>
    </location>
</feature>
<feature type="mutagenesis site" description="Highly active." evidence="5">
    <original>Q</original>
    <variation>N</variation>
    <location>
        <position position="258"/>
    </location>
</feature>
<feature type="mutagenesis site" description="Loss of activity." evidence="5">
    <original>E</original>
    <variation>C</variation>
    <location>
        <position position="272"/>
    </location>
</feature>
<feature type="mutagenesis site" description="Strong decrease in activity." evidence="5">
    <original>E</original>
    <variation>D</variation>
    <location>
        <position position="272"/>
    </location>
</feature>
<feature type="mutagenesis site" description="Loss of activity." evidence="5">
    <original>D</original>
    <variation>C</variation>
    <location>
        <position position="304"/>
    </location>
</feature>
<feature type="mutagenesis site" description="Strong decrease in activity." evidence="5">
    <original>D</original>
    <variation>E</variation>
    <location>
        <position position="304"/>
    </location>
</feature>
<feature type="mutagenesis site" description="Decrease in activity." evidence="5">
    <original>R</original>
    <variation>C</variation>
    <location>
        <position position="385"/>
    </location>
</feature>
<feature type="mutagenesis site" description="Highly active." evidence="5">
    <original>R</original>
    <variation>K</variation>
    <location>
        <position position="385"/>
    </location>
</feature>
<feature type="mutagenesis site" description="Strong decrease in activity." evidence="4">
    <original>P</original>
    <variation>C</variation>
    <location>
        <position position="421"/>
    </location>
</feature>
<feature type="mutagenesis site" description="Highly active." evidence="4">
    <original>P</original>
    <variation>G</variation>
    <location>
        <position position="421"/>
    </location>
</feature>
<feature type="mutagenesis site" description="Highly active." evidence="4">
    <original>S</original>
    <variation>C</variation>
    <location>
        <position position="423"/>
    </location>
</feature>
<feature type="mutagenesis site" description="Highly active." evidence="4">
    <original>I</original>
    <variation>C</variation>
    <location>
        <position position="424"/>
    </location>
</feature>
<feature type="mutagenesis site" description="Strong decrease in activity." evidence="4">
    <original>Y</original>
    <variation>C</variation>
    <location>
        <position position="425"/>
    </location>
</feature>
<feature type="mutagenesis site" description="Decrease in activity." evidence="4">
    <original>L</original>
    <variation>C</variation>
    <location>
        <position position="427"/>
    </location>
</feature>
<feature type="mutagenesis site" description="Loss of activity." evidence="4">
    <original>N</original>
    <variation>T</variation>
    <location>
        <position position="430"/>
    </location>
</feature>
<feature type="mutagenesis site" description="Strong decrease in activity." evidence="4">
    <original>I</original>
    <variation>A</variation>
    <variation>S</variation>
    <variation>T</variation>
    <variation>V</variation>
    <location>
        <position position="432"/>
    </location>
</feature>
<feature type="mutagenesis site" description="Loss of activity." evidence="4">
    <original>I</original>
    <variation>L</variation>
    <variation>M</variation>
    <variation>E</variation>
    <variation>F</variation>
    <location>
        <position position="432"/>
    </location>
</feature>
<feature type="mutagenesis site" description="Highly active." evidence="4">
    <original>I</original>
    <variation>N</variation>
    <variation>Q</variation>
    <location>
        <position position="432"/>
    </location>
</feature>
<feature type="mutagenesis site" description="Highly active." evidence="4">
    <original>G</original>
    <variation>C</variation>
    <location>
        <position position="436"/>
    </location>
</feature>
<organism>
    <name type="scientific">Escherichia coli (strain K12)</name>
    <dbReference type="NCBI Taxonomy" id="83333"/>
    <lineage>
        <taxon>Bacteria</taxon>
        <taxon>Pseudomonadati</taxon>
        <taxon>Pseudomonadota</taxon>
        <taxon>Gammaproteobacteria</taxon>
        <taxon>Enterobacterales</taxon>
        <taxon>Enterobacteriaceae</taxon>
        <taxon>Escherichia</taxon>
    </lineage>
</organism>
<comment type="function">
    <text evidence="3">Specific, proton motive force-dependent high-affinity transporter for xanthine.</text>
</comment>
<comment type="catalytic activity">
    <reaction evidence="3">
        <text>xanthine(in) + H(+)(in) = xanthine(out) + H(+)(out)</text>
        <dbReference type="Rhea" id="RHEA:29663"/>
        <dbReference type="ChEBI" id="CHEBI:15378"/>
        <dbReference type="ChEBI" id="CHEBI:17712"/>
    </reaction>
</comment>
<comment type="activity regulation">
    <text evidence="3">Inhibited by CCCP and N-ethylmaleimide.</text>
</comment>
<comment type="biophysicochemical properties">
    <kinetics>
        <KM evidence="3">4.2 uM for xanthine</KM>
        <Vmax evidence="3">6.36 nmol/min/mg enzyme</Vmax>
    </kinetics>
</comment>
<comment type="subcellular location">
    <subcellularLocation>
        <location evidence="2 3">Cell inner membrane</location>
        <topology evidence="1">Multi-pass membrane protein</topology>
    </subcellularLocation>
</comment>
<comment type="similarity">
    <text evidence="6">Belongs to the nucleobase:cation symporter-2 (NCS2) (TC 2.A.40) family.</text>
</comment>
<comment type="sequence caution" evidence="6">
    <conflict type="erroneous initiation">
        <sequence resource="EMBL-CDS" id="AAA83063"/>
    </conflict>
    <text>Extended N-terminus.</text>
</comment>
<name>XANQ_ECOLI</name>
<reference key="1">
    <citation type="journal article" date="1997" name="Science">
        <title>The complete genome sequence of Escherichia coli K-12.</title>
        <authorList>
            <person name="Blattner F.R."/>
            <person name="Plunkett G. III"/>
            <person name="Bloch C.A."/>
            <person name="Perna N.T."/>
            <person name="Burland V."/>
            <person name="Riley M."/>
            <person name="Collado-Vides J."/>
            <person name="Glasner J.D."/>
            <person name="Rode C.K."/>
            <person name="Mayhew G.F."/>
            <person name="Gregor J."/>
            <person name="Davis N.W."/>
            <person name="Kirkpatrick H.A."/>
            <person name="Goeden M.A."/>
            <person name="Rose D.J."/>
            <person name="Mau B."/>
            <person name="Shao Y."/>
        </authorList>
    </citation>
    <scope>NUCLEOTIDE SEQUENCE [LARGE SCALE GENOMIC DNA]</scope>
    <source>
        <strain>K12 / MG1655 / ATCC 47076</strain>
    </source>
</reference>
<reference key="2">
    <citation type="journal article" date="2006" name="Mol. Syst. Biol.">
        <title>Highly accurate genome sequences of Escherichia coli K-12 strains MG1655 and W3110.</title>
        <authorList>
            <person name="Hayashi K."/>
            <person name="Morooka N."/>
            <person name="Yamamoto Y."/>
            <person name="Fujita K."/>
            <person name="Isono K."/>
            <person name="Choi S."/>
            <person name="Ohtsubo E."/>
            <person name="Baba T."/>
            <person name="Wanner B.L."/>
            <person name="Mori H."/>
            <person name="Horiuchi T."/>
        </authorList>
    </citation>
    <scope>NUCLEOTIDE SEQUENCE [LARGE SCALE GENOMIC DNA]</scope>
    <source>
        <strain>K12 / W3110 / ATCC 27325 / DSM 5911</strain>
    </source>
</reference>
<reference key="3">
    <citation type="journal article" date="2005" name="Mol. Membr. Biol.">
        <title>Cloning and functional characterization of two bacterial members of the NAT/NCS2 family in Escherichia coli.</title>
        <authorList>
            <person name="Karatza P."/>
            <person name="Frillingos S."/>
        </authorList>
    </citation>
    <scope>FUNCTION</scope>
    <scope>CATALYTIC ACTIVITY</scope>
    <scope>ACTIVITY REGULATION</scope>
    <scope>BIOPHYSICOCHEMICAL PROPERTIES</scope>
    <scope>SUBCELLULAR LOCATION</scope>
    <source>
        <strain>K12</strain>
    </source>
</reference>
<reference key="4">
    <citation type="journal article" date="2005" name="Science">
        <title>Global topology analysis of the Escherichia coli inner membrane proteome.</title>
        <authorList>
            <person name="Daley D.O."/>
            <person name="Rapp M."/>
            <person name="Granseth E."/>
            <person name="Melen K."/>
            <person name="Drew D."/>
            <person name="von Heijne G."/>
        </authorList>
    </citation>
    <scope>TOPOLOGY [LARGE SCALE ANALYSIS]</scope>
    <scope>SUBCELLULAR LOCATION</scope>
    <source>
        <strain>K12 / MG1655 / ATCC 47076</strain>
    </source>
</reference>
<reference key="5">
    <citation type="journal article" date="2008" name="J. Biol. Chem.">
        <title>Cysteine-scanning analysis of putative helix XII in the YgfO xanthine permease: ILE-432 and ASN-430 are important.</title>
        <authorList>
            <person name="Papakostas K."/>
            <person name="Georgopoulou E."/>
            <person name="Frillingos S."/>
        </authorList>
    </citation>
    <scope>MUTAGENESIS OF PRO-421; SER-423; ILE-424; TYR-425; LEU-427; ASN-430; ILE-432 AND GLY-436</scope>
    <source>
        <strain>K12</strain>
    </source>
</reference>
<reference key="6">
    <citation type="journal article" date="2009" name="J. Biol. Chem.">
        <title>Role of intramembrane polar residues in the YgfO xanthine permease: HIS-31 and ASN-93 are crucial for affinity and specificity, and ASP-304 and GLU-272 are irreplaceable.</title>
        <authorList>
            <person name="Karena E."/>
            <person name="Frillingos S."/>
        </authorList>
    </citation>
    <scope>MUTAGENESIS OF HIS-31; ASN-93; LYS-164; ASP-232; GLN-258; GLU-272; ASP-304 AND ARG-385</scope>
    <source>
        <strain>K12</strain>
    </source>
</reference>
<proteinExistence type="evidence at protein level"/>
<dbReference type="EMBL" id="U28375">
    <property type="protein sequence ID" value="AAA83063.1"/>
    <property type="status" value="ALT_INIT"/>
    <property type="molecule type" value="Genomic_DNA"/>
</dbReference>
<dbReference type="EMBL" id="U00096">
    <property type="protein sequence ID" value="AAC75920.2"/>
    <property type="molecule type" value="Genomic_DNA"/>
</dbReference>
<dbReference type="EMBL" id="AP009048">
    <property type="protein sequence ID" value="BAE76948.1"/>
    <property type="molecule type" value="Genomic_DNA"/>
</dbReference>
<dbReference type="PIR" id="B65072">
    <property type="entry name" value="B65072"/>
</dbReference>
<dbReference type="RefSeq" id="NP_417358.2">
    <property type="nucleotide sequence ID" value="NC_000913.3"/>
</dbReference>
<dbReference type="RefSeq" id="WP_001280192.1">
    <property type="nucleotide sequence ID" value="NZ_STEB01000001.1"/>
</dbReference>
<dbReference type="SMR" id="P67444"/>
<dbReference type="BioGRID" id="4261448">
    <property type="interactions" value="22"/>
</dbReference>
<dbReference type="FunCoup" id="P67444">
    <property type="interactions" value="341"/>
</dbReference>
<dbReference type="STRING" id="511145.b2882"/>
<dbReference type="TCDB" id="2.A.40.4.3">
    <property type="family name" value="the nucleobase/ascorbate transporter (nat) or nucleobase:cation symporter-2 (ncs2) family"/>
</dbReference>
<dbReference type="PaxDb" id="511145-b2882"/>
<dbReference type="DNASU" id="949075"/>
<dbReference type="EnsemblBacteria" id="AAC75920">
    <property type="protein sequence ID" value="AAC75920"/>
    <property type="gene ID" value="b2882"/>
</dbReference>
<dbReference type="GeneID" id="75205281"/>
<dbReference type="GeneID" id="949075"/>
<dbReference type="KEGG" id="ecj:JW2850"/>
<dbReference type="KEGG" id="eco:b2882"/>
<dbReference type="KEGG" id="ecoc:C3026_15805"/>
<dbReference type="PATRIC" id="fig|1411691.4.peg.3852"/>
<dbReference type="EchoBASE" id="EB2877"/>
<dbReference type="eggNOG" id="COG2233">
    <property type="taxonomic scope" value="Bacteria"/>
</dbReference>
<dbReference type="HOGENOM" id="CLU_017959_8_0_6"/>
<dbReference type="InParanoid" id="P67444"/>
<dbReference type="OMA" id="HVAVMIV"/>
<dbReference type="OrthoDB" id="9805749at2"/>
<dbReference type="PhylomeDB" id="P67444"/>
<dbReference type="BioCyc" id="EcoCyc:YGFO-MONOMER"/>
<dbReference type="BioCyc" id="MetaCyc:YGFO-MONOMER"/>
<dbReference type="SABIO-RK" id="P67444"/>
<dbReference type="PRO" id="PR:P67444"/>
<dbReference type="Proteomes" id="UP000000625">
    <property type="component" value="Chromosome"/>
</dbReference>
<dbReference type="GO" id="GO:0005886">
    <property type="term" value="C:plasma membrane"/>
    <property type="evidence" value="ECO:0000314"/>
    <property type="project" value="EcoCyc"/>
</dbReference>
<dbReference type="GO" id="GO:0042907">
    <property type="term" value="F:xanthine transmembrane transporter activity"/>
    <property type="evidence" value="ECO:0000314"/>
    <property type="project" value="EcoCyc"/>
</dbReference>
<dbReference type="GO" id="GO:0042906">
    <property type="term" value="P:xanthine transport"/>
    <property type="evidence" value="ECO:0000314"/>
    <property type="project" value="EcoCyc"/>
</dbReference>
<dbReference type="InterPro" id="IPR006043">
    <property type="entry name" value="NCS2"/>
</dbReference>
<dbReference type="InterPro" id="IPR006042">
    <property type="entry name" value="Xan_ur_permease"/>
</dbReference>
<dbReference type="NCBIfam" id="TIGR00801">
    <property type="entry name" value="ncs2"/>
    <property type="match status" value="1"/>
</dbReference>
<dbReference type="PANTHER" id="PTHR42810">
    <property type="entry name" value="PURINE PERMEASE C1399.01C-RELATED"/>
    <property type="match status" value="1"/>
</dbReference>
<dbReference type="PANTHER" id="PTHR42810:SF5">
    <property type="entry name" value="XANTHINE PERMEASE XANQ"/>
    <property type="match status" value="1"/>
</dbReference>
<dbReference type="Pfam" id="PF00860">
    <property type="entry name" value="Xan_ur_permease"/>
    <property type="match status" value="1"/>
</dbReference>
<dbReference type="PROSITE" id="PS01116">
    <property type="entry name" value="XANTH_URACIL_PERMASE"/>
    <property type="match status" value="1"/>
</dbReference>